<protein>
    <recommendedName>
        <fullName evidence="1">Small ribosomal subunit protein eS6</fullName>
    </recommendedName>
    <alternativeName>
        <fullName evidence="2">30S ribosomal protein S6e</fullName>
    </alternativeName>
</protein>
<dbReference type="EMBL" id="CP000493">
    <property type="protein sequence ID" value="ABM80308.1"/>
    <property type="molecule type" value="Genomic_DNA"/>
</dbReference>
<dbReference type="RefSeq" id="WP_011821626.1">
    <property type="nucleotide sequence ID" value="NC_008818.1"/>
</dbReference>
<dbReference type="SMR" id="A2BJZ7"/>
<dbReference type="STRING" id="415426.Hbut_0442"/>
<dbReference type="EnsemblBacteria" id="ABM80308">
    <property type="protein sequence ID" value="ABM80308"/>
    <property type="gene ID" value="Hbut_0442"/>
</dbReference>
<dbReference type="GeneID" id="4781855"/>
<dbReference type="KEGG" id="hbu:Hbut_0442"/>
<dbReference type="eggNOG" id="arCOG01946">
    <property type="taxonomic scope" value="Archaea"/>
</dbReference>
<dbReference type="HOGENOM" id="CLU_1275302_0_0_2"/>
<dbReference type="OrthoDB" id="7793at2157"/>
<dbReference type="Proteomes" id="UP000002593">
    <property type="component" value="Chromosome"/>
</dbReference>
<dbReference type="GO" id="GO:1990904">
    <property type="term" value="C:ribonucleoprotein complex"/>
    <property type="evidence" value="ECO:0007669"/>
    <property type="project" value="UniProtKB-KW"/>
</dbReference>
<dbReference type="GO" id="GO:0005840">
    <property type="term" value="C:ribosome"/>
    <property type="evidence" value="ECO:0007669"/>
    <property type="project" value="UniProtKB-KW"/>
</dbReference>
<dbReference type="GO" id="GO:0003735">
    <property type="term" value="F:structural constituent of ribosome"/>
    <property type="evidence" value="ECO:0007669"/>
    <property type="project" value="InterPro"/>
</dbReference>
<dbReference type="GO" id="GO:0006412">
    <property type="term" value="P:translation"/>
    <property type="evidence" value="ECO:0007669"/>
    <property type="project" value="UniProtKB-UniRule"/>
</dbReference>
<dbReference type="HAMAP" id="MF_00512">
    <property type="entry name" value="Ribosomal_eS6"/>
    <property type="match status" value="1"/>
</dbReference>
<dbReference type="InterPro" id="IPR001377">
    <property type="entry name" value="Ribosomal_eS6"/>
</dbReference>
<dbReference type="InterPro" id="IPR020924">
    <property type="entry name" value="Ribosomal_eS6_arc"/>
</dbReference>
<dbReference type="InterPro" id="IPR018282">
    <property type="entry name" value="Ribosomal_eS6_CS"/>
</dbReference>
<dbReference type="NCBIfam" id="NF003292">
    <property type="entry name" value="PRK04290.1-1"/>
    <property type="match status" value="1"/>
</dbReference>
<dbReference type="PANTHER" id="PTHR11502">
    <property type="entry name" value="40S RIBOSOMAL PROTEIN S6"/>
    <property type="match status" value="1"/>
</dbReference>
<dbReference type="Pfam" id="PF01092">
    <property type="entry name" value="Ribosomal_S6e"/>
    <property type="match status" value="1"/>
</dbReference>
<dbReference type="SMART" id="SM01405">
    <property type="entry name" value="Ribosomal_S6e"/>
    <property type="match status" value="1"/>
</dbReference>
<dbReference type="PROSITE" id="PS00578">
    <property type="entry name" value="RIBOSOMAL_S6E"/>
    <property type="match status" value="1"/>
</dbReference>
<keyword id="KW-1185">Reference proteome</keyword>
<keyword id="KW-0687">Ribonucleoprotein</keyword>
<keyword id="KW-0689">Ribosomal protein</keyword>
<accession>A2BJZ7</accession>
<sequence length="217" mass="23992">MPEFKIVISDPEAKADLPVYKVKVKGDESIEYGDDEKNQRKLPVCKLNPKLLEKLNAVHGIVTVRIRKEDRKFNYTCKATADANVPEDTVHVSLEWLGDKVGAEEAEGEVFRAKAWQITITSPAADQLIGLKIGDTFDGGLVGLPGYKLLIRGGSDNSGFPMLPSIPGPVKKRVLLSGPPGFHPREKGERRRKTVRGNTITHDIVQINTVIVYPKKE</sequence>
<reference key="1">
    <citation type="journal article" date="2007" name="Archaea">
        <title>The genome of Hyperthermus butylicus: a sulfur-reducing, peptide fermenting, neutrophilic Crenarchaeote growing up to 108 degrees C.</title>
        <authorList>
            <person name="Bruegger K."/>
            <person name="Chen L."/>
            <person name="Stark M."/>
            <person name="Zibat A."/>
            <person name="Redder P."/>
            <person name="Ruepp A."/>
            <person name="Awayez M."/>
            <person name="She Q."/>
            <person name="Garrett R.A."/>
            <person name="Klenk H.-P."/>
        </authorList>
    </citation>
    <scope>NUCLEOTIDE SEQUENCE [LARGE SCALE GENOMIC DNA]</scope>
    <source>
        <strain>DSM 5456 / JCM 9403 / PLM1-5</strain>
    </source>
</reference>
<feature type="chain" id="PRO_1000050634" description="Small ribosomal subunit protein eS6">
    <location>
        <begin position="1"/>
        <end position="217"/>
    </location>
</feature>
<proteinExistence type="inferred from homology"/>
<evidence type="ECO:0000255" key="1">
    <source>
        <dbReference type="HAMAP-Rule" id="MF_00512"/>
    </source>
</evidence>
<evidence type="ECO:0000305" key="2"/>
<name>RS6E_HYPBU</name>
<gene>
    <name evidence="1" type="primary">rps6e</name>
    <name type="ordered locus">Hbut_0442</name>
</gene>
<organism>
    <name type="scientific">Hyperthermus butylicus (strain DSM 5456 / JCM 9403 / PLM1-5)</name>
    <dbReference type="NCBI Taxonomy" id="415426"/>
    <lineage>
        <taxon>Archaea</taxon>
        <taxon>Thermoproteota</taxon>
        <taxon>Thermoprotei</taxon>
        <taxon>Desulfurococcales</taxon>
        <taxon>Pyrodictiaceae</taxon>
        <taxon>Hyperthermus</taxon>
    </lineage>
</organism>
<comment type="similarity">
    <text evidence="1">Belongs to the eukaryotic ribosomal protein eS6 family.</text>
</comment>